<feature type="chain" id="PRO_0000196095" description="Cuticle protein 12.5">
    <location>
        <begin position="1"/>
        <end position="129"/>
    </location>
</feature>
<feature type="repeat" description="1" evidence="2">
    <location>
        <begin position="7"/>
        <end position="10"/>
    </location>
</feature>
<feature type="repeat" description="2" evidence="2">
    <location>
        <begin position="15"/>
        <end position="18"/>
    </location>
</feature>
<feature type="repeat" description="3" evidence="2">
    <location>
        <begin position="23"/>
        <end position="26"/>
    </location>
</feature>
<feature type="repeat" description="4" evidence="2">
    <location>
        <begin position="28"/>
        <end position="31"/>
    </location>
</feature>
<feature type="repeat" description="5" evidence="2">
    <location>
        <begin position="37"/>
        <end position="40"/>
    </location>
</feature>
<feature type="repeat" description="6" evidence="2">
    <location>
        <begin position="67"/>
        <end position="70"/>
    </location>
</feature>
<feature type="repeat" description="7" evidence="2">
    <location>
        <begin position="79"/>
        <end position="82"/>
    </location>
</feature>
<feature type="repeat" description="8" evidence="2">
    <location>
        <begin position="91"/>
        <end position="94"/>
    </location>
</feature>
<feature type="repeat" description="9" evidence="2">
    <location>
        <begin position="103"/>
        <end position="106"/>
    </location>
</feature>
<feature type="repeat" description="10" evidence="2">
    <location>
        <begin position="117"/>
        <end position="120"/>
    </location>
</feature>
<proteinExistence type="evidence at protein level"/>
<sequence>GYLGGYAAPAYAGYAAPAYAGYAAPAYAAPVAAVAHAAPAVAVAHAPVPSSAANTYRISQTARLAYAAPAVAHAPLAYAAPAVAHAPLGYAAPAYGVARYAAAAPALGYGYGAYGYAAPALGYGHALVH</sequence>
<accession>P83990</accession>
<reference evidence="2" key="1">
    <citation type="journal article" date="2003" name="Biochim. Biophys. Acta">
        <title>Sequence determination of three cuticular proteins and isoforms from the migratory locust, Locusta migratoria, using a combination of Edman degradation and mass spectrometric techniques.</title>
        <authorList>
            <person name="Kalume D.E."/>
            <person name="Kieffer S."/>
            <person name="Rafn K."/>
            <person name="Skou L."/>
            <person name="Andersen S.O."/>
            <person name="Roepstorff P."/>
        </authorList>
    </citation>
    <scope>PROTEIN SEQUENCE</scope>
    <scope>FUNCTION</scope>
    <scope>MASS SPECTROMETRY</scope>
    <source>
        <tissue evidence="1">Pharate adult cuticle</tissue>
    </source>
</reference>
<name>CU125_LOCMI</name>
<comment type="function">
    <text evidence="1">Component of the cuticle of migratory locust which contains more than 100 different structural proteins.</text>
</comment>
<comment type="domain">
    <text evidence="2">The tetrapeptide (A-A-P-[AV]) repeats found throughout the protein are also present in many proteins constituting the protective envelope of other species.</text>
</comment>
<comment type="mass spectrometry"/>
<comment type="mass spectrometry"/>
<dbReference type="GO" id="GO:0042302">
    <property type="term" value="F:structural constituent of cuticle"/>
    <property type="evidence" value="ECO:0007669"/>
    <property type="project" value="UniProtKB-KW"/>
</dbReference>
<protein>
    <recommendedName>
        <fullName>Cuticle protein 12.5</fullName>
    </recommendedName>
    <alternativeName>
        <fullName>LM-ACP 12.5</fullName>
        <shortName>LM-12.5</shortName>
    </alternativeName>
</protein>
<keyword id="KW-0193">Cuticle</keyword>
<keyword id="KW-0903">Direct protein sequencing</keyword>
<keyword id="KW-0677">Repeat</keyword>
<evidence type="ECO:0000269" key="1">
    <source>
    </source>
</evidence>
<evidence type="ECO:0000305" key="2"/>
<organism>
    <name type="scientific">Locusta migratoria</name>
    <name type="common">Migratory locust</name>
    <dbReference type="NCBI Taxonomy" id="7004"/>
    <lineage>
        <taxon>Eukaryota</taxon>
        <taxon>Metazoa</taxon>
        <taxon>Ecdysozoa</taxon>
        <taxon>Arthropoda</taxon>
        <taxon>Hexapoda</taxon>
        <taxon>Insecta</taxon>
        <taxon>Pterygota</taxon>
        <taxon>Neoptera</taxon>
        <taxon>Polyneoptera</taxon>
        <taxon>Orthoptera</taxon>
        <taxon>Caelifera</taxon>
        <taxon>Acrididea</taxon>
        <taxon>Acridomorpha</taxon>
        <taxon>Acridoidea</taxon>
        <taxon>Acrididae</taxon>
        <taxon>Oedipodinae</taxon>
        <taxon>Locusta</taxon>
    </lineage>
</organism>